<protein>
    <recommendedName>
        <fullName evidence="1">Pyridoxine/pyridoxamine 5'-phosphate oxidase</fullName>
        <ecNumber evidence="1">1.4.3.5</ecNumber>
    </recommendedName>
    <alternativeName>
        <fullName evidence="1">PNP/PMP oxidase</fullName>
        <shortName evidence="1">PNPOx</shortName>
    </alternativeName>
    <alternativeName>
        <fullName evidence="1">Pyridoxal 5'-phosphate synthase</fullName>
    </alternativeName>
</protein>
<name>PDXH_CERS1</name>
<sequence>MDRTGIFAGDDPFAIAAGWLAEAEPQEPNDPNAIALATVDAAGLPNVRMVLLKEIEAEAFVFYTNYGSQKAVEIETSGKAAFVLHWKSLRRQIRVRGLVEREEGVQADAYYASRSLKSRLGAWASEQSRPLASRTSLLAEVARVTARFGTNPPRPAFWGGFRIRPLEIEFWADGAFRLHDRFRWRRNSLSDGWSIERLNP</sequence>
<proteinExistence type="inferred from homology"/>
<feature type="chain" id="PRO_0000292320" description="Pyridoxine/pyridoxamine 5'-phosphate oxidase">
    <location>
        <begin position="1"/>
        <end position="200"/>
    </location>
</feature>
<feature type="binding site" evidence="1">
    <location>
        <begin position="48"/>
        <end position="53"/>
    </location>
    <ligand>
        <name>FMN</name>
        <dbReference type="ChEBI" id="CHEBI:58210"/>
    </ligand>
</feature>
<feature type="binding site" evidence="1">
    <location>
        <position position="53"/>
    </location>
    <ligand>
        <name>substrate</name>
    </ligand>
</feature>
<feature type="binding site" evidence="1">
    <location>
        <begin position="63"/>
        <end position="64"/>
    </location>
    <ligand>
        <name>FMN</name>
        <dbReference type="ChEBI" id="CHEBI:58210"/>
    </ligand>
</feature>
<feature type="binding site" evidence="1">
    <location>
        <position position="70"/>
    </location>
    <ligand>
        <name>FMN</name>
        <dbReference type="ChEBI" id="CHEBI:58210"/>
    </ligand>
</feature>
<feature type="binding site" evidence="1">
    <location>
        <position position="92"/>
    </location>
    <ligand>
        <name>FMN</name>
        <dbReference type="ChEBI" id="CHEBI:58210"/>
    </ligand>
</feature>
<feature type="binding site" evidence="1">
    <location>
        <position position="110"/>
    </location>
    <ligand>
        <name>substrate</name>
    </ligand>
</feature>
<feature type="binding site" evidence="1">
    <location>
        <position position="114"/>
    </location>
    <ligand>
        <name>substrate</name>
    </ligand>
</feature>
<feature type="binding site" evidence="1">
    <location>
        <position position="118"/>
    </location>
    <ligand>
        <name>substrate</name>
    </ligand>
</feature>
<feature type="binding site" evidence="1">
    <location>
        <begin position="127"/>
        <end position="128"/>
    </location>
    <ligand>
        <name>FMN</name>
        <dbReference type="ChEBI" id="CHEBI:58210"/>
    </ligand>
</feature>
<feature type="binding site" evidence="1">
    <location>
        <position position="171"/>
    </location>
    <ligand>
        <name>FMN</name>
        <dbReference type="ChEBI" id="CHEBI:58210"/>
    </ligand>
</feature>
<feature type="binding site" evidence="1">
    <location>
        <begin position="177"/>
        <end position="179"/>
    </location>
    <ligand>
        <name>substrate</name>
    </ligand>
</feature>
<feature type="binding site" evidence="1">
    <location>
        <position position="181"/>
    </location>
    <ligand>
        <name>FMN</name>
        <dbReference type="ChEBI" id="CHEBI:58210"/>
    </ligand>
</feature>
<evidence type="ECO:0000255" key="1">
    <source>
        <dbReference type="HAMAP-Rule" id="MF_01629"/>
    </source>
</evidence>
<keyword id="KW-0285">Flavoprotein</keyword>
<keyword id="KW-0288">FMN</keyword>
<keyword id="KW-0560">Oxidoreductase</keyword>
<keyword id="KW-0664">Pyridoxine biosynthesis</keyword>
<gene>
    <name evidence="1" type="primary">pdxH</name>
    <name type="ordered locus">Rsph17029_1020</name>
</gene>
<organism>
    <name type="scientific">Cereibacter sphaeroides (strain ATCC 17029 / ATH 2.4.9)</name>
    <name type="common">Rhodobacter sphaeroides</name>
    <dbReference type="NCBI Taxonomy" id="349101"/>
    <lineage>
        <taxon>Bacteria</taxon>
        <taxon>Pseudomonadati</taxon>
        <taxon>Pseudomonadota</taxon>
        <taxon>Alphaproteobacteria</taxon>
        <taxon>Rhodobacterales</taxon>
        <taxon>Paracoccaceae</taxon>
        <taxon>Cereibacter</taxon>
    </lineage>
</organism>
<accession>A3PIG5</accession>
<dbReference type="EC" id="1.4.3.5" evidence="1"/>
<dbReference type="EMBL" id="CP000577">
    <property type="protein sequence ID" value="ABN76131.1"/>
    <property type="molecule type" value="Genomic_DNA"/>
</dbReference>
<dbReference type="RefSeq" id="WP_011840749.1">
    <property type="nucleotide sequence ID" value="NC_009049.1"/>
</dbReference>
<dbReference type="SMR" id="A3PIG5"/>
<dbReference type="KEGG" id="rsh:Rsph17029_1020"/>
<dbReference type="HOGENOM" id="CLU_032263_2_3_5"/>
<dbReference type="UniPathway" id="UPA01068">
    <property type="reaction ID" value="UER00304"/>
</dbReference>
<dbReference type="UniPathway" id="UPA01068">
    <property type="reaction ID" value="UER00305"/>
</dbReference>
<dbReference type="GO" id="GO:0010181">
    <property type="term" value="F:FMN binding"/>
    <property type="evidence" value="ECO:0007669"/>
    <property type="project" value="UniProtKB-UniRule"/>
</dbReference>
<dbReference type="GO" id="GO:0004733">
    <property type="term" value="F:pyridoxamine phosphate oxidase activity"/>
    <property type="evidence" value="ECO:0007669"/>
    <property type="project" value="UniProtKB-UniRule"/>
</dbReference>
<dbReference type="GO" id="GO:0008615">
    <property type="term" value="P:pyridoxine biosynthetic process"/>
    <property type="evidence" value="ECO:0007669"/>
    <property type="project" value="UniProtKB-KW"/>
</dbReference>
<dbReference type="Gene3D" id="2.30.110.10">
    <property type="entry name" value="Electron Transport, Fmn-binding Protein, Chain A"/>
    <property type="match status" value="1"/>
</dbReference>
<dbReference type="HAMAP" id="MF_01629">
    <property type="entry name" value="PdxH"/>
    <property type="match status" value="1"/>
</dbReference>
<dbReference type="InterPro" id="IPR000659">
    <property type="entry name" value="Pyridox_Oxase"/>
</dbReference>
<dbReference type="InterPro" id="IPR019740">
    <property type="entry name" value="Pyridox_Oxase_CS"/>
</dbReference>
<dbReference type="InterPro" id="IPR011576">
    <property type="entry name" value="Pyridox_Oxase_N"/>
</dbReference>
<dbReference type="InterPro" id="IPR019576">
    <property type="entry name" value="Pyridoxamine_oxidase_dimer_C"/>
</dbReference>
<dbReference type="InterPro" id="IPR012349">
    <property type="entry name" value="Split_barrel_FMN-bd"/>
</dbReference>
<dbReference type="NCBIfam" id="TIGR00558">
    <property type="entry name" value="pdxH"/>
    <property type="match status" value="1"/>
</dbReference>
<dbReference type="NCBIfam" id="NF004231">
    <property type="entry name" value="PRK05679.1"/>
    <property type="match status" value="1"/>
</dbReference>
<dbReference type="PANTHER" id="PTHR10851:SF0">
    <property type="entry name" value="PYRIDOXINE-5'-PHOSPHATE OXIDASE"/>
    <property type="match status" value="1"/>
</dbReference>
<dbReference type="PANTHER" id="PTHR10851">
    <property type="entry name" value="PYRIDOXINE-5-PHOSPHATE OXIDASE"/>
    <property type="match status" value="1"/>
</dbReference>
<dbReference type="Pfam" id="PF10590">
    <property type="entry name" value="PNP_phzG_C"/>
    <property type="match status" value="1"/>
</dbReference>
<dbReference type="Pfam" id="PF01243">
    <property type="entry name" value="PNPOx_N"/>
    <property type="match status" value="1"/>
</dbReference>
<dbReference type="PIRSF" id="PIRSF000190">
    <property type="entry name" value="Pyd_amn-ph_oxd"/>
    <property type="match status" value="1"/>
</dbReference>
<dbReference type="SUPFAM" id="SSF50475">
    <property type="entry name" value="FMN-binding split barrel"/>
    <property type="match status" value="1"/>
</dbReference>
<dbReference type="PROSITE" id="PS01064">
    <property type="entry name" value="PYRIDOX_OXIDASE"/>
    <property type="match status" value="1"/>
</dbReference>
<reference key="1">
    <citation type="submission" date="2007-02" db="EMBL/GenBank/DDBJ databases">
        <title>Complete sequence of chromosome 1 of Rhodobacter sphaeroides ATCC 17029.</title>
        <authorList>
            <person name="Copeland A."/>
            <person name="Lucas S."/>
            <person name="Lapidus A."/>
            <person name="Barry K."/>
            <person name="Detter J.C."/>
            <person name="Glavina del Rio T."/>
            <person name="Hammon N."/>
            <person name="Israni S."/>
            <person name="Dalin E."/>
            <person name="Tice H."/>
            <person name="Pitluck S."/>
            <person name="Kiss H."/>
            <person name="Brettin T."/>
            <person name="Bruce D."/>
            <person name="Han C."/>
            <person name="Tapia R."/>
            <person name="Gilna P."/>
            <person name="Schmutz J."/>
            <person name="Larimer F."/>
            <person name="Land M."/>
            <person name="Hauser L."/>
            <person name="Kyrpides N."/>
            <person name="Mikhailova N."/>
            <person name="Richardson P."/>
            <person name="Mackenzie C."/>
            <person name="Choudhary M."/>
            <person name="Donohue T.J."/>
            <person name="Kaplan S."/>
        </authorList>
    </citation>
    <scope>NUCLEOTIDE SEQUENCE [LARGE SCALE GENOMIC DNA]</scope>
    <source>
        <strain>ATCC 17029 / ATH 2.4.9</strain>
    </source>
</reference>
<comment type="function">
    <text evidence="1">Catalyzes the oxidation of either pyridoxine 5'-phosphate (PNP) or pyridoxamine 5'-phosphate (PMP) into pyridoxal 5'-phosphate (PLP).</text>
</comment>
<comment type="catalytic activity">
    <reaction evidence="1">
        <text>pyridoxamine 5'-phosphate + O2 + H2O = pyridoxal 5'-phosphate + H2O2 + NH4(+)</text>
        <dbReference type="Rhea" id="RHEA:15817"/>
        <dbReference type="ChEBI" id="CHEBI:15377"/>
        <dbReference type="ChEBI" id="CHEBI:15379"/>
        <dbReference type="ChEBI" id="CHEBI:16240"/>
        <dbReference type="ChEBI" id="CHEBI:28938"/>
        <dbReference type="ChEBI" id="CHEBI:58451"/>
        <dbReference type="ChEBI" id="CHEBI:597326"/>
        <dbReference type="EC" id="1.4.3.5"/>
    </reaction>
</comment>
<comment type="catalytic activity">
    <reaction evidence="1">
        <text>pyridoxine 5'-phosphate + O2 = pyridoxal 5'-phosphate + H2O2</text>
        <dbReference type="Rhea" id="RHEA:15149"/>
        <dbReference type="ChEBI" id="CHEBI:15379"/>
        <dbReference type="ChEBI" id="CHEBI:16240"/>
        <dbReference type="ChEBI" id="CHEBI:58589"/>
        <dbReference type="ChEBI" id="CHEBI:597326"/>
        <dbReference type="EC" id="1.4.3.5"/>
    </reaction>
</comment>
<comment type="cofactor">
    <cofactor evidence="1">
        <name>FMN</name>
        <dbReference type="ChEBI" id="CHEBI:58210"/>
    </cofactor>
    <text evidence="1">Binds 1 FMN per subunit.</text>
</comment>
<comment type="pathway">
    <text evidence="1">Cofactor metabolism; pyridoxal 5'-phosphate salvage; pyridoxal 5'-phosphate from pyridoxamine 5'-phosphate: step 1/1.</text>
</comment>
<comment type="pathway">
    <text evidence="1">Cofactor metabolism; pyridoxal 5'-phosphate salvage; pyridoxal 5'-phosphate from pyridoxine 5'-phosphate: step 1/1.</text>
</comment>
<comment type="subunit">
    <text evidence="1">Homodimer.</text>
</comment>
<comment type="similarity">
    <text evidence="1">Belongs to the pyridoxamine 5'-phosphate oxidase family.</text>
</comment>